<evidence type="ECO:0000255" key="1"/>
<evidence type="ECO:0000269" key="2">
    <source>
    </source>
</evidence>
<evidence type="ECO:0007829" key="3">
    <source>
        <dbReference type="PDB" id="6C41"/>
    </source>
</evidence>
<proteinExistence type="evidence at protein level"/>
<name>CLAVA_STYCL</name>
<accession>P80710</accession>
<accession>O18490</accession>
<protein>
    <recommendedName>
        <fullName>Clavanin-A</fullName>
    </recommendedName>
</protein>
<organism>
    <name type="scientific">Styela clava</name>
    <name type="common">Sea squirt</name>
    <dbReference type="NCBI Taxonomy" id="7725"/>
    <lineage>
        <taxon>Eukaryota</taxon>
        <taxon>Metazoa</taxon>
        <taxon>Chordata</taxon>
        <taxon>Tunicata</taxon>
        <taxon>Ascidiacea</taxon>
        <taxon>Stolidobranchia</taxon>
        <taxon>Styelidae</taxon>
        <taxon>Styela</taxon>
    </lineage>
</organism>
<keyword id="KW-0002">3D-structure</keyword>
<keyword id="KW-0027">Amidation</keyword>
<keyword id="KW-0044">Antibiotic</keyword>
<keyword id="KW-0929">Antimicrobial</keyword>
<keyword id="KW-0903">Direct protein sequencing</keyword>
<keyword id="KW-0964">Secreted</keyword>
<keyword id="KW-0732">Signal</keyword>
<feature type="signal peptide" evidence="1">
    <location>
        <begin position="1"/>
        <end position="19"/>
    </location>
</feature>
<feature type="propeptide" id="PRO_0000020936" evidence="2">
    <location>
        <begin position="20"/>
        <end position="29"/>
    </location>
</feature>
<feature type="peptide" id="PRO_0000020937" description="Clavanin-A">
    <location>
        <begin position="30"/>
        <end position="52"/>
    </location>
</feature>
<feature type="propeptide" id="PRO_0000020938">
    <location>
        <begin position="54"/>
        <end position="80"/>
    </location>
</feature>
<feature type="modified residue" description="Phenylalanine amide" evidence="2">
    <location>
        <position position="52"/>
    </location>
</feature>
<feature type="helix" evidence="3">
    <location>
        <begin position="31"/>
        <end position="51"/>
    </location>
</feature>
<sequence>MKTTILILLILGLGINAKSLEERKSEEEKVFQFLGKIIHHVGNFVHGFSHVFGDDQQDNGKFYGHYAEDNGKHWYDTGDQ</sequence>
<reference key="1">
    <citation type="journal article" date="1997" name="FEBS Lett.">
        <title>cDNA cloning of Clavanins: antimicrobial peptides of tunicate hemocytes.</title>
        <authorList>
            <person name="Zhao C."/>
            <person name="Lian H."/>
            <person name="Lee I.H."/>
            <person name="Lehrer R.I."/>
        </authorList>
    </citation>
    <scope>NUCLEOTIDE SEQUENCE [MRNA]</scope>
    <source>
        <tissue>Hemocyte</tissue>
        <tissue>Pharynx</tissue>
    </source>
</reference>
<reference key="2">
    <citation type="journal article" date="1997" name="FEBS Lett.">
        <title>Clavanins, alpha-helical antimicrobial peptides from tunicate hemocytes.</title>
        <authorList>
            <person name="Lee I.H."/>
            <person name="Zhao C."/>
            <person name="Cho Y."/>
            <person name="Harwig S.S.L."/>
            <person name="Cooper E.L."/>
            <person name="Lehrer R.I."/>
        </authorList>
    </citation>
    <scope>PROTEIN SEQUENCE OF 30-52</scope>
    <scope>AMIDATION AT PHE-52</scope>
    <scope>SYNTHESIS OF 30-52</scope>
    <source>
        <tissue>Hemocyte</tissue>
    </source>
</reference>
<dbReference type="EMBL" id="Y11020">
    <property type="protein sequence ID" value="CAA71902.1"/>
    <property type="molecule type" value="mRNA"/>
</dbReference>
<dbReference type="EMBL" id="Y10405">
    <property type="protein sequence ID" value="CAA71424.1"/>
    <property type="molecule type" value="mRNA"/>
</dbReference>
<dbReference type="RefSeq" id="XP_039273325.1">
    <property type="nucleotide sequence ID" value="XM_039417391.1"/>
</dbReference>
<dbReference type="PDB" id="6C41">
    <property type="method" value="NMR"/>
    <property type="chains" value="A=30-52"/>
</dbReference>
<dbReference type="PDBsum" id="6C41"/>
<dbReference type="SMR" id="P80710"/>
<dbReference type="GeneID" id="120347426"/>
<dbReference type="GO" id="GO:0005576">
    <property type="term" value="C:extracellular region"/>
    <property type="evidence" value="ECO:0007669"/>
    <property type="project" value="UniProtKB-SubCell"/>
</dbReference>
<dbReference type="GO" id="GO:0042742">
    <property type="term" value="P:defense response to bacterium"/>
    <property type="evidence" value="ECO:0007669"/>
    <property type="project" value="UniProtKB-KW"/>
</dbReference>
<dbReference type="InterPro" id="IPR008453">
    <property type="entry name" value="Clavanin"/>
</dbReference>
<dbReference type="Pfam" id="PF05452">
    <property type="entry name" value="Clavanin"/>
    <property type="match status" value="1"/>
</dbReference>
<comment type="function">
    <text>Has antimicrobial activity.</text>
</comment>
<comment type="subcellular location">
    <subcellularLocation>
        <location>Secreted</location>
    </subcellularLocation>
</comment>